<dbReference type="EMBL" id="AE014133">
    <property type="protein sequence ID" value="AAN58115.1"/>
    <property type="molecule type" value="Genomic_DNA"/>
</dbReference>
<dbReference type="RefSeq" id="NP_720809.1">
    <property type="nucleotide sequence ID" value="NC_004350.2"/>
</dbReference>
<dbReference type="RefSeq" id="WP_002262492.1">
    <property type="nucleotide sequence ID" value="NC_004350.2"/>
</dbReference>
<dbReference type="SMR" id="P59167"/>
<dbReference type="STRING" id="210007.SMU_357"/>
<dbReference type="GeneID" id="93860064"/>
<dbReference type="KEGG" id="smu:SMU_357"/>
<dbReference type="PATRIC" id="fig|210007.7.peg.311"/>
<dbReference type="eggNOG" id="COG0048">
    <property type="taxonomic scope" value="Bacteria"/>
</dbReference>
<dbReference type="HOGENOM" id="CLU_104295_1_2_9"/>
<dbReference type="OrthoDB" id="9802366at2"/>
<dbReference type="PhylomeDB" id="P59167"/>
<dbReference type="Proteomes" id="UP000002512">
    <property type="component" value="Chromosome"/>
</dbReference>
<dbReference type="GO" id="GO:0015935">
    <property type="term" value="C:small ribosomal subunit"/>
    <property type="evidence" value="ECO:0007669"/>
    <property type="project" value="InterPro"/>
</dbReference>
<dbReference type="GO" id="GO:0019843">
    <property type="term" value="F:rRNA binding"/>
    <property type="evidence" value="ECO:0007669"/>
    <property type="project" value="UniProtKB-UniRule"/>
</dbReference>
<dbReference type="GO" id="GO:0003735">
    <property type="term" value="F:structural constituent of ribosome"/>
    <property type="evidence" value="ECO:0007669"/>
    <property type="project" value="InterPro"/>
</dbReference>
<dbReference type="GO" id="GO:0000049">
    <property type="term" value="F:tRNA binding"/>
    <property type="evidence" value="ECO:0007669"/>
    <property type="project" value="UniProtKB-UniRule"/>
</dbReference>
<dbReference type="GO" id="GO:0006412">
    <property type="term" value="P:translation"/>
    <property type="evidence" value="ECO:0007669"/>
    <property type="project" value="UniProtKB-UniRule"/>
</dbReference>
<dbReference type="CDD" id="cd03368">
    <property type="entry name" value="Ribosomal_S12"/>
    <property type="match status" value="1"/>
</dbReference>
<dbReference type="FunFam" id="2.40.50.140:FF:000001">
    <property type="entry name" value="30S ribosomal protein S12"/>
    <property type="match status" value="1"/>
</dbReference>
<dbReference type="Gene3D" id="2.40.50.140">
    <property type="entry name" value="Nucleic acid-binding proteins"/>
    <property type="match status" value="1"/>
</dbReference>
<dbReference type="HAMAP" id="MF_00403_B">
    <property type="entry name" value="Ribosomal_uS12_B"/>
    <property type="match status" value="1"/>
</dbReference>
<dbReference type="InterPro" id="IPR012340">
    <property type="entry name" value="NA-bd_OB-fold"/>
</dbReference>
<dbReference type="InterPro" id="IPR006032">
    <property type="entry name" value="Ribosomal_uS12"/>
</dbReference>
<dbReference type="InterPro" id="IPR005679">
    <property type="entry name" value="Ribosomal_uS12_bac"/>
</dbReference>
<dbReference type="NCBIfam" id="TIGR00981">
    <property type="entry name" value="rpsL_bact"/>
    <property type="match status" value="1"/>
</dbReference>
<dbReference type="PANTHER" id="PTHR11652">
    <property type="entry name" value="30S RIBOSOMAL PROTEIN S12 FAMILY MEMBER"/>
    <property type="match status" value="1"/>
</dbReference>
<dbReference type="Pfam" id="PF00164">
    <property type="entry name" value="Ribosom_S12_S23"/>
    <property type="match status" value="1"/>
</dbReference>
<dbReference type="PIRSF" id="PIRSF002133">
    <property type="entry name" value="Ribosomal_S12/S23"/>
    <property type="match status" value="1"/>
</dbReference>
<dbReference type="PRINTS" id="PR01034">
    <property type="entry name" value="RIBOSOMALS12"/>
</dbReference>
<dbReference type="SUPFAM" id="SSF50249">
    <property type="entry name" value="Nucleic acid-binding proteins"/>
    <property type="match status" value="1"/>
</dbReference>
<dbReference type="PROSITE" id="PS00055">
    <property type="entry name" value="RIBOSOMAL_S12"/>
    <property type="match status" value="1"/>
</dbReference>
<protein>
    <recommendedName>
        <fullName evidence="1">Small ribosomal subunit protein uS12</fullName>
    </recommendedName>
    <alternativeName>
        <fullName evidence="3">30S ribosomal protein S12</fullName>
    </alternativeName>
</protein>
<evidence type="ECO:0000255" key="1">
    <source>
        <dbReference type="HAMAP-Rule" id="MF_00403"/>
    </source>
</evidence>
<evidence type="ECO:0000256" key="2">
    <source>
        <dbReference type="SAM" id="MobiDB-lite"/>
    </source>
</evidence>
<evidence type="ECO:0000305" key="3"/>
<sequence length="137" mass="15109">MPTINQLVRKPRKSKVEKSDSPALNIGYNSHKKVHTKLAAPQKRGVATRVGTMTPKKPNSALRKFARVRLSNLIEVTAYIPGIGHNLQEHSVVLIRGGRVKDLPGVRYHIVRGALDTAGVTDRKQGRSKYGTKKPKA</sequence>
<organism>
    <name type="scientific">Streptococcus mutans serotype c (strain ATCC 700610 / UA159)</name>
    <dbReference type="NCBI Taxonomy" id="210007"/>
    <lineage>
        <taxon>Bacteria</taxon>
        <taxon>Bacillati</taxon>
        <taxon>Bacillota</taxon>
        <taxon>Bacilli</taxon>
        <taxon>Lactobacillales</taxon>
        <taxon>Streptococcaceae</taxon>
        <taxon>Streptococcus</taxon>
    </lineage>
</organism>
<proteinExistence type="inferred from homology"/>
<name>RS12_STRMU</name>
<comment type="function">
    <text evidence="1">With S4 and S5 plays an important role in translational accuracy.</text>
</comment>
<comment type="function">
    <text evidence="1">Interacts with and stabilizes bases of the 16S rRNA that are involved in tRNA selection in the A site and with the mRNA backbone. Located at the interface of the 30S and 50S subunits, it traverses the body of the 30S subunit contacting proteins on the other side and probably holding the rRNA structure together. The combined cluster of proteins S8, S12 and S17 appears to hold together the shoulder and platform of the 30S subunit.</text>
</comment>
<comment type="subunit">
    <text evidence="1">Part of the 30S ribosomal subunit. Contacts proteins S8 and S17. May interact with IF1 in the 30S initiation complex.</text>
</comment>
<comment type="similarity">
    <text evidence="1">Belongs to the universal ribosomal protein uS12 family.</text>
</comment>
<comment type="caution">
    <text evidence="3">Because the enzyme that would modify Asp-102 to 3-methylthioaspartic acid has not been found in the proteome of this organism, that modification is not predicted.</text>
</comment>
<feature type="chain" id="PRO_0000146324" description="Small ribosomal subunit protein uS12">
    <location>
        <begin position="1"/>
        <end position="137"/>
    </location>
</feature>
<feature type="region of interest" description="Disordered" evidence="2">
    <location>
        <begin position="1"/>
        <end position="21"/>
    </location>
</feature>
<feature type="region of interest" description="Disordered" evidence="2">
    <location>
        <begin position="34"/>
        <end position="57"/>
    </location>
</feature>
<gene>
    <name evidence="1" type="primary">rpsL</name>
    <name type="ordered locus">SMU_357</name>
</gene>
<keyword id="KW-1185">Reference proteome</keyword>
<keyword id="KW-0687">Ribonucleoprotein</keyword>
<keyword id="KW-0689">Ribosomal protein</keyword>
<keyword id="KW-0694">RNA-binding</keyword>
<keyword id="KW-0699">rRNA-binding</keyword>
<keyword id="KW-0820">tRNA-binding</keyword>
<reference key="1">
    <citation type="journal article" date="2002" name="Proc. Natl. Acad. Sci. U.S.A.">
        <title>Genome sequence of Streptococcus mutans UA159, a cariogenic dental pathogen.</title>
        <authorList>
            <person name="Ajdic D.J."/>
            <person name="McShan W.M."/>
            <person name="McLaughlin R.E."/>
            <person name="Savic G."/>
            <person name="Chang J."/>
            <person name="Carson M.B."/>
            <person name="Primeaux C."/>
            <person name="Tian R."/>
            <person name="Kenton S."/>
            <person name="Jia H.G."/>
            <person name="Lin S.P."/>
            <person name="Qian Y."/>
            <person name="Li S."/>
            <person name="Zhu H."/>
            <person name="Najar F.Z."/>
            <person name="Lai H."/>
            <person name="White J."/>
            <person name="Roe B.A."/>
            <person name="Ferretti J.J."/>
        </authorList>
    </citation>
    <scope>NUCLEOTIDE SEQUENCE [LARGE SCALE GENOMIC DNA]</scope>
    <source>
        <strain>ATCC 700610 / UA159</strain>
    </source>
</reference>
<accession>P59167</accession>